<accession>B1LNU8</accession>
<sequence>MDRIIEKLDHGWWVVSHEQKLWLPKGELPYGEAANFDLVGQRALQIGEWQGEPVWLVQQQRRHDMGSVRQVIDLDVGLFQLAGRGVQLAEFYRSHKYCGYCGHEMYPSKTEWAMLCSHCRERYYPQIAPCIIVAIRRDDSILLAQHTRHRNGVHTVLAGFVEVGETLEQAVAREVMEESGIKVKNLRYVTSQPWPFPQSLMTAFMAEYDSGEIVIDPKELLEANWYRYDDLPLLPPPGTVARRLIEDTVAMCRAEYE</sequence>
<evidence type="ECO:0000255" key="1">
    <source>
        <dbReference type="HAMAP-Rule" id="MF_00297"/>
    </source>
</evidence>
<proteinExistence type="inferred from homology"/>
<protein>
    <recommendedName>
        <fullName evidence="1">NAD-capped RNA hydrolase NudC</fullName>
        <shortName evidence="1">DeNADding enzyme NudC</shortName>
        <ecNumber evidence="1">3.6.1.-</ecNumber>
    </recommendedName>
    <alternativeName>
        <fullName evidence="1">NADH pyrophosphatase</fullName>
        <ecNumber evidence="1">3.6.1.22</ecNumber>
    </alternativeName>
</protein>
<gene>
    <name evidence="1" type="primary">nudC</name>
    <name type="ordered locus">EcSMS35_4444</name>
</gene>
<comment type="function">
    <text evidence="1">mRNA decapping enzyme that specifically removes the nicotinamide adenine dinucleotide (NAD) cap from a subset of mRNAs by hydrolyzing the diphosphate linkage to produce nicotinamide mononucleotide (NMN) and 5' monophosphate mRNA. The NAD-cap is present at the 5'-end of some mRNAs and stabilizes RNA against 5'-processing. Has preference for mRNAs with a 5'-end purine. Catalyzes the hydrolysis of a broad range of dinucleotide pyrophosphates.</text>
</comment>
<comment type="catalytic activity">
    <reaction evidence="1">
        <text>a 5'-end NAD(+)-phospho-ribonucleoside in mRNA + H2O = a 5'-end phospho-adenosine-phospho-ribonucleoside in mRNA + beta-nicotinamide D-ribonucleotide + 2 H(+)</text>
        <dbReference type="Rhea" id="RHEA:60876"/>
        <dbReference type="Rhea" id="RHEA-COMP:15698"/>
        <dbReference type="Rhea" id="RHEA-COMP:15719"/>
        <dbReference type="ChEBI" id="CHEBI:14649"/>
        <dbReference type="ChEBI" id="CHEBI:15377"/>
        <dbReference type="ChEBI" id="CHEBI:15378"/>
        <dbReference type="ChEBI" id="CHEBI:144029"/>
        <dbReference type="ChEBI" id="CHEBI:144051"/>
    </reaction>
    <physiologicalReaction direction="left-to-right" evidence="1">
        <dbReference type="Rhea" id="RHEA:60877"/>
    </physiologicalReaction>
</comment>
<comment type="catalytic activity">
    <reaction evidence="1">
        <text>NAD(+) + H2O = beta-nicotinamide D-ribonucleotide + AMP + 2 H(+)</text>
        <dbReference type="Rhea" id="RHEA:11800"/>
        <dbReference type="ChEBI" id="CHEBI:14649"/>
        <dbReference type="ChEBI" id="CHEBI:15377"/>
        <dbReference type="ChEBI" id="CHEBI:15378"/>
        <dbReference type="ChEBI" id="CHEBI:57540"/>
        <dbReference type="ChEBI" id="CHEBI:456215"/>
        <dbReference type="EC" id="3.6.1.22"/>
    </reaction>
</comment>
<comment type="catalytic activity">
    <reaction evidence="1">
        <text>NADH + H2O = reduced beta-nicotinamide D-ribonucleotide + AMP + 2 H(+)</text>
        <dbReference type="Rhea" id="RHEA:48868"/>
        <dbReference type="ChEBI" id="CHEBI:15377"/>
        <dbReference type="ChEBI" id="CHEBI:15378"/>
        <dbReference type="ChEBI" id="CHEBI:57945"/>
        <dbReference type="ChEBI" id="CHEBI:90832"/>
        <dbReference type="ChEBI" id="CHEBI:456215"/>
        <dbReference type="EC" id="3.6.1.22"/>
    </reaction>
</comment>
<comment type="cofactor">
    <cofactor evidence="1">
        <name>Mg(2+)</name>
        <dbReference type="ChEBI" id="CHEBI:18420"/>
    </cofactor>
    <cofactor evidence="1">
        <name>Mn(2+)</name>
        <dbReference type="ChEBI" id="CHEBI:29035"/>
    </cofactor>
    <text evidence="1">Divalent metal cations. Mg(2+) or Mn(2+).</text>
</comment>
<comment type="cofactor">
    <cofactor evidence="1">
        <name>Zn(2+)</name>
        <dbReference type="ChEBI" id="CHEBI:29105"/>
    </cofactor>
    <text evidence="1">Binds 1 zinc ion per subunit.</text>
</comment>
<comment type="subunit">
    <text evidence="1">Homodimer.</text>
</comment>
<comment type="similarity">
    <text evidence="1">Belongs to the Nudix hydrolase family. NudC subfamily.</text>
</comment>
<dbReference type="EC" id="3.6.1.-" evidence="1"/>
<dbReference type="EC" id="3.6.1.22" evidence="1"/>
<dbReference type="EMBL" id="CP000970">
    <property type="protein sequence ID" value="ACB16609.1"/>
    <property type="molecule type" value="Genomic_DNA"/>
</dbReference>
<dbReference type="RefSeq" id="WP_000373941.1">
    <property type="nucleotide sequence ID" value="NC_010498.1"/>
</dbReference>
<dbReference type="SMR" id="B1LNU8"/>
<dbReference type="KEGG" id="ecm:EcSMS35_4444"/>
<dbReference type="HOGENOM" id="CLU_037162_0_1_6"/>
<dbReference type="Proteomes" id="UP000007011">
    <property type="component" value="Chromosome"/>
</dbReference>
<dbReference type="GO" id="GO:0005829">
    <property type="term" value="C:cytosol"/>
    <property type="evidence" value="ECO:0007669"/>
    <property type="project" value="TreeGrafter"/>
</dbReference>
<dbReference type="GO" id="GO:0000287">
    <property type="term" value="F:magnesium ion binding"/>
    <property type="evidence" value="ECO:0007669"/>
    <property type="project" value="UniProtKB-UniRule"/>
</dbReference>
<dbReference type="GO" id="GO:0030145">
    <property type="term" value="F:manganese ion binding"/>
    <property type="evidence" value="ECO:0007669"/>
    <property type="project" value="UniProtKB-UniRule"/>
</dbReference>
<dbReference type="GO" id="GO:0000210">
    <property type="term" value="F:NAD+ diphosphatase activity"/>
    <property type="evidence" value="ECO:0007669"/>
    <property type="project" value="UniProtKB-UniRule"/>
</dbReference>
<dbReference type="GO" id="GO:0035529">
    <property type="term" value="F:NADH pyrophosphatase activity"/>
    <property type="evidence" value="ECO:0007669"/>
    <property type="project" value="TreeGrafter"/>
</dbReference>
<dbReference type="GO" id="GO:0110153">
    <property type="term" value="F:RNA NAD-cap (NMN-forming) hydrolase activity"/>
    <property type="evidence" value="ECO:0007669"/>
    <property type="project" value="RHEA"/>
</dbReference>
<dbReference type="GO" id="GO:0008270">
    <property type="term" value="F:zinc ion binding"/>
    <property type="evidence" value="ECO:0007669"/>
    <property type="project" value="UniProtKB-UniRule"/>
</dbReference>
<dbReference type="GO" id="GO:0019677">
    <property type="term" value="P:NAD catabolic process"/>
    <property type="evidence" value="ECO:0007669"/>
    <property type="project" value="TreeGrafter"/>
</dbReference>
<dbReference type="GO" id="GO:0006734">
    <property type="term" value="P:NADH metabolic process"/>
    <property type="evidence" value="ECO:0007669"/>
    <property type="project" value="TreeGrafter"/>
</dbReference>
<dbReference type="GO" id="GO:0006742">
    <property type="term" value="P:NADP catabolic process"/>
    <property type="evidence" value="ECO:0007669"/>
    <property type="project" value="TreeGrafter"/>
</dbReference>
<dbReference type="CDD" id="cd03429">
    <property type="entry name" value="NUDIX_NADH_pyrophosphatase_Nudt13"/>
    <property type="match status" value="1"/>
</dbReference>
<dbReference type="FunFam" id="3.90.79.10:FF:000004">
    <property type="entry name" value="NADH pyrophosphatase"/>
    <property type="match status" value="1"/>
</dbReference>
<dbReference type="FunFam" id="3.90.79.20:FF:000001">
    <property type="entry name" value="NADH pyrophosphatase"/>
    <property type="match status" value="1"/>
</dbReference>
<dbReference type="Gene3D" id="3.90.79.20">
    <property type="match status" value="1"/>
</dbReference>
<dbReference type="Gene3D" id="3.90.79.10">
    <property type="entry name" value="Nucleoside Triphosphate Pyrophosphohydrolase"/>
    <property type="match status" value="1"/>
</dbReference>
<dbReference type="HAMAP" id="MF_00297">
    <property type="entry name" value="Nudix_NudC"/>
    <property type="match status" value="1"/>
</dbReference>
<dbReference type="InterPro" id="IPR050241">
    <property type="entry name" value="NAD-cap_RNA_hydrolase_NudC"/>
</dbReference>
<dbReference type="InterPro" id="IPR049734">
    <property type="entry name" value="NudC-like_C"/>
</dbReference>
<dbReference type="InterPro" id="IPR015797">
    <property type="entry name" value="NUDIX_hydrolase-like_dom_sf"/>
</dbReference>
<dbReference type="InterPro" id="IPR020084">
    <property type="entry name" value="NUDIX_hydrolase_CS"/>
</dbReference>
<dbReference type="InterPro" id="IPR000086">
    <property type="entry name" value="NUDIX_hydrolase_dom"/>
</dbReference>
<dbReference type="InterPro" id="IPR022925">
    <property type="entry name" value="RNA_Hydrolase_NudC"/>
</dbReference>
<dbReference type="InterPro" id="IPR015376">
    <property type="entry name" value="Znr_NADH_PPase"/>
</dbReference>
<dbReference type="NCBIfam" id="NF001299">
    <property type="entry name" value="PRK00241.1"/>
    <property type="match status" value="1"/>
</dbReference>
<dbReference type="PANTHER" id="PTHR42904:SF6">
    <property type="entry name" value="NAD-CAPPED RNA HYDROLASE NUDT12"/>
    <property type="match status" value="1"/>
</dbReference>
<dbReference type="PANTHER" id="PTHR42904">
    <property type="entry name" value="NUDIX HYDROLASE, NUDC SUBFAMILY"/>
    <property type="match status" value="1"/>
</dbReference>
<dbReference type="Pfam" id="PF00293">
    <property type="entry name" value="NUDIX"/>
    <property type="match status" value="1"/>
</dbReference>
<dbReference type="Pfam" id="PF09297">
    <property type="entry name" value="Zn_ribbon_NUD"/>
    <property type="match status" value="1"/>
</dbReference>
<dbReference type="SUPFAM" id="SSF55811">
    <property type="entry name" value="Nudix"/>
    <property type="match status" value="2"/>
</dbReference>
<dbReference type="PROSITE" id="PS51462">
    <property type="entry name" value="NUDIX"/>
    <property type="match status" value="1"/>
</dbReference>
<dbReference type="PROSITE" id="PS00893">
    <property type="entry name" value="NUDIX_BOX"/>
    <property type="match status" value="1"/>
</dbReference>
<feature type="chain" id="PRO_1000119464" description="NAD-capped RNA hydrolase NudC">
    <location>
        <begin position="1"/>
        <end position="257"/>
    </location>
</feature>
<feature type="domain" description="Nudix hydrolase" evidence="1">
    <location>
        <begin position="125"/>
        <end position="248"/>
    </location>
</feature>
<feature type="short sequence motif" description="Nudix box" evidence="1">
    <location>
        <begin position="159"/>
        <end position="180"/>
    </location>
</feature>
<feature type="binding site" evidence="1">
    <location>
        <position position="25"/>
    </location>
    <ligand>
        <name>substrate</name>
    </ligand>
</feature>
<feature type="binding site" evidence="1">
    <location>
        <position position="69"/>
    </location>
    <ligand>
        <name>substrate</name>
    </ligand>
</feature>
<feature type="binding site" evidence="1">
    <location>
        <position position="98"/>
    </location>
    <ligand>
        <name>Zn(2+)</name>
        <dbReference type="ChEBI" id="CHEBI:29105"/>
    </ligand>
</feature>
<feature type="binding site" evidence="1">
    <location>
        <position position="101"/>
    </location>
    <ligand>
        <name>Zn(2+)</name>
        <dbReference type="ChEBI" id="CHEBI:29105"/>
    </ligand>
</feature>
<feature type="binding site" evidence="1">
    <location>
        <position position="111"/>
    </location>
    <ligand>
        <name>substrate</name>
    </ligand>
</feature>
<feature type="binding site" evidence="1">
    <location>
        <position position="116"/>
    </location>
    <ligand>
        <name>Zn(2+)</name>
        <dbReference type="ChEBI" id="CHEBI:29105"/>
    </ligand>
</feature>
<feature type="binding site" evidence="1">
    <location>
        <position position="119"/>
    </location>
    <ligand>
        <name>Zn(2+)</name>
        <dbReference type="ChEBI" id="CHEBI:29105"/>
    </ligand>
</feature>
<feature type="binding site" evidence="1">
    <location>
        <position position="124"/>
    </location>
    <ligand>
        <name>substrate</name>
    </ligand>
</feature>
<feature type="binding site" evidence="1">
    <location>
        <position position="158"/>
    </location>
    <ligand>
        <name>a divalent metal cation</name>
        <dbReference type="ChEBI" id="CHEBI:60240"/>
        <label>1</label>
    </ligand>
</feature>
<feature type="binding site" evidence="1">
    <location>
        <position position="174"/>
    </location>
    <ligand>
        <name>a divalent metal cation</name>
        <dbReference type="ChEBI" id="CHEBI:60240"/>
        <label>2</label>
    </ligand>
</feature>
<feature type="binding site" evidence="1">
    <location>
        <position position="174"/>
    </location>
    <ligand>
        <name>a divalent metal cation</name>
        <dbReference type="ChEBI" id="CHEBI:60240"/>
        <label>3</label>
    </ligand>
</feature>
<feature type="binding site" evidence="1">
    <location>
        <position position="178"/>
    </location>
    <ligand>
        <name>a divalent metal cation</name>
        <dbReference type="ChEBI" id="CHEBI:60240"/>
        <label>1</label>
    </ligand>
</feature>
<feature type="binding site" evidence="1">
    <location>
        <position position="178"/>
    </location>
    <ligand>
        <name>a divalent metal cation</name>
        <dbReference type="ChEBI" id="CHEBI:60240"/>
        <label>3</label>
    </ligand>
</feature>
<feature type="binding site" evidence="1">
    <location>
        <begin position="192"/>
        <end position="199"/>
    </location>
    <ligand>
        <name>substrate</name>
    </ligand>
</feature>
<feature type="binding site" evidence="1">
    <location>
        <position position="219"/>
    </location>
    <ligand>
        <name>a divalent metal cation</name>
        <dbReference type="ChEBI" id="CHEBI:60240"/>
        <label>1</label>
    </ligand>
</feature>
<feature type="binding site" evidence="1">
    <location>
        <position position="219"/>
    </location>
    <ligand>
        <name>a divalent metal cation</name>
        <dbReference type="ChEBI" id="CHEBI:60240"/>
        <label>3</label>
    </ligand>
</feature>
<feature type="binding site" evidence="1">
    <location>
        <position position="241"/>
    </location>
    <ligand>
        <name>substrate</name>
    </ligand>
</feature>
<keyword id="KW-0378">Hydrolase</keyword>
<keyword id="KW-0460">Magnesium</keyword>
<keyword id="KW-0464">Manganese</keyword>
<keyword id="KW-0479">Metal-binding</keyword>
<keyword id="KW-0520">NAD</keyword>
<keyword id="KW-0862">Zinc</keyword>
<organism>
    <name type="scientific">Escherichia coli (strain SMS-3-5 / SECEC)</name>
    <dbReference type="NCBI Taxonomy" id="439855"/>
    <lineage>
        <taxon>Bacteria</taxon>
        <taxon>Pseudomonadati</taxon>
        <taxon>Pseudomonadota</taxon>
        <taxon>Gammaproteobacteria</taxon>
        <taxon>Enterobacterales</taxon>
        <taxon>Enterobacteriaceae</taxon>
        <taxon>Escherichia</taxon>
    </lineage>
</organism>
<reference key="1">
    <citation type="journal article" date="2008" name="J. Bacteriol.">
        <title>Insights into the environmental resistance gene pool from the genome sequence of the multidrug-resistant environmental isolate Escherichia coli SMS-3-5.</title>
        <authorList>
            <person name="Fricke W.F."/>
            <person name="Wright M.S."/>
            <person name="Lindell A.H."/>
            <person name="Harkins D.M."/>
            <person name="Baker-Austin C."/>
            <person name="Ravel J."/>
            <person name="Stepanauskas R."/>
        </authorList>
    </citation>
    <scope>NUCLEOTIDE SEQUENCE [LARGE SCALE GENOMIC DNA]</scope>
    <source>
        <strain>SMS-3-5 / SECEC</strain>
    </source>
</reference>
<name>NUDC_ECOSM</name>